<name>TI214_NICSY</name>
<evidence type="ECO:0000250" key="1">
    <source>
        <dbReference type="UniProtKB" id="P56785"/>
    </source>
</evidence>
<evidence type="ECO:0000255" key="2"/>
<evidence type="ECO:0000256" key="3">
    <source>
        <dbReference type="SAM" id="MobiDB-lite"/>
    </source>
</evidence>
<evidence type="ECO:0000305" key="4"/>
<protein>
    <recommendedName>
        <fullName evidence="1">Protein TIC 214</fullName>
    </recommendedName>
    <alternativeName>
        <fullName evidence="1">Translocon at the inner envelope membrane of chloroplasts 214</fullName>
        <shortName evidence="1">AtTIC214</shortName>
    </alternativeName>
</protein>
<organism>
    <name type="scientific">Nicotiana sylvestris</name>
    <name type="common">Wood tobacco</name>
    <name type="synonym">South American tobacco</name>
    <dbReference type="NCBI Taxonomy" id="4096"/>
    <lineage>
        <taxon>Eukaryota</taxon>
        <taxon>Viridiplantae</taxon>
        <taxon>Streptophyta</taxon>
        <taxon>Embryophyta</taxon>
        <taxon>Tracheophyta</taxon>
        <taxon>Spermatophyta</taxon>
        <taxon>Magnoliopsida</taxon>
        <taxon>eudicotyledons</taxon>
        <taxon>Gunneridae</taxon>
        <taxon>Pentapetalae</taxon>
        <taxon>asterids</taxon>
        <taxon>lamiids</taxon>
        <taxon>Solanales</taxon>
        <taxon>Solanaceae</taxon>
        <taxon>Nicotianoideae</taxon>
        <taxon>Nicotianeae</taxon>
        <taxon>Nicotiana</taxon>
    </lineage>
</organism>
<proteinExistence type="inferred from homology"/>
<gene>
    <name evidence="1" type="primary">TIC214</name>
    <name type="synonym">ycf1-A</name>
</gene>
<gene>
    <name evidence="1" type="primary">TIC214</name>
    <name type="synonym">ycf1-B</name>
</gene>
<reference key="1">
    <citation type="journal article" date="2006" name="Mol. Genet. Genomics">
        <title>The chloroplast genome of Nicotiana sylvestris and Nicotiana tomentosiformis: complete sequencing confirms that the Nicotiana sylvestris progenitor is the maternal genome donor of Nicotiana tabacum.</title>
        <authorList>
            <person name="Yukawa M."/>
            <person name="Tsudzuki T."/>
            <person name="Sugiura M."/>
        </authorList>
    </citation>
    <scope>NUCLEOTIDE SEQUENCE [LARGE SCALE GENOMIC DNA]</scope>
</reference>
<feature type="chain" id="PRO_0000262617" description="Protein TIC 214">
    <location>
        <begin position="1"/>
        <end position="1901"/>
    </location>
</feature>
<feature type="transmembrane region" description="Helical" evidence="2">
    <location>
        <begin position="18"/>
        <end position="38"/>
    </location>
</feature>
<feature type="transmembrane region" description="Helical" evidence="2">
    <location>
        <begin position="64"/>
        <end position="84"/>
    </location>
</feature>
<feature type="transmembrane region" description="Helical" evidence="2">
    <location>
        <begin position="87"/>
        <end position="107"/>
    </location>
</feature>
<feature type="transmembrane region" description="Helical" evidence="2">
    <location>
        <begin position="124"/>
        <end position="144"/>
    </location>
</feature>
<feature type="transmembrane region" description="Helical" evidence="2">
    <location>
        <begin position="172"/>
        <end position="192"/>
    </location>
</feature>
<feature type="transmembrane region" description="Helical" evidence="2">
    <location>
        <begin position="221"/>
        <end position="241"/>
    </location>
</feature>
<feature type="region of interest" description="Disordered" evidence="3">
    <location>
        <begin position="248"/>
        <end position="299"/>
    </location>
</feature>
<feature type="region of interest" description="Disordered" evidence="3">
    <location>
        <begin position="797"/>
        <end position="817"/>
    </location>
</feature>
<feature type="region of interest" description="Disordered" evidence="3">
    <location>
        <begin position="1591"/>
        <end position="1618"/>
    </location>
</feature>
<feature type="compositionally biased region" description="Acidic residues" evidence="3">
    <location>
        <begin position="256"/>
        <end position="268"/>
    </location>
</feature>
<feature type="compositionally biased region" description="Basic and acidic residues" evidence="3">
    <location>
        <begin position="1591"/>
        <end position="1611"/>
    </location>
</feature>
<feature type="sequence conflict" description="In Ref. 1; BAE46710." evidence="4" ref="1">
    <original>NINTSNSPIYDYEDSYL</original>
    <variation>CNCELKKTENKEFDSQS</variation>
    <location>
        <begin position="333"/>
        <end position="349"/>
    </location>
</feature>
<dbReference type="EMBL" id="AB237912">
    <property type="protein sequence ID" value="BAE46722.1"/>
    <property type="molecule type" value="Genomic_DNA"/>
</dbReference>
<dbReference type="EMBL" id="AB237912">
    <property type="protein sequence ID" value="BAE46710.1"/>
    <property type="status" value="ALT_INIT"/>
    <property type="molecule type" value="Genomic_DNA"/>
</dbReference>
<dbReference type="RefSeq" id="YP_358733.1">
    <property type="nucleotide sequence ID" value="NC_007500.1"/>
</dbReference>
<dbReference type="KEGG" id="nsy:3735122"/>
<dbReference type="KEGG" id="nsy:3735164"/>
<dbReference type="OrthoDB" id="24116at4085"/>
<dbReference type="Proteomes" id="UP000189701">
    <property type="component" value="Chloroplast Pltd"/>
</dbReference>
<dbReference type="GO" id="GO:0009706">
    <property type="term" value="C:chloroplast inner membrane"/>
    <property type="evidence" value="ECO:0007669"/>
    <property type="project" value="UniProtKB-SubCell"/>
</dbReference>
<dbReference type="GO" id="GO:0015031">
    <property type="term" value="P:protein transport"/>
    <property type="evidence" value="ECO:0007669"/>
    <property type="project" value="UniProtKB-KW"/>
</dbReference>
<dbReference type="InterPro" id="IPR008896">
    <property type="entry name" value="TIC214"/>
</dbReference>
<dbReference type="PANTHER" id="PTHR33163:SF40">
    <property type="entry name" value="PROTEIN TIC 214"/>
    <property type="match status" value="1"/>
</dbReference>
<dbReference type="PANTHER" id="PTHR33163">
    <property type="entry name" value="PROTEIN TIC 214-RELATED"/>
    <property type="match status" value="1"/>
</dbReference>
<dbReference type="Pfam" id="PF05758">
    <property type="entry name" value="Ycf1"/>
    <property type="match status" value="1"/>
</dbReference>
<accession>Q3C1P6</accession>
<accession>Q3C1P0</accession>
<sequence length="1901" mass="226141">MIFQSFLLGNLVSLCMKIINSVVVVGLYYGFLTTFSIGPSYLFLLRALVMEEGTEKKVSATTGFITGQLMMFISIYYAPLHLALGRPHTITVLALPYLLFHFFWNNHKHFFDYGSTTRNSMRNLSIQCVFLNNLIFQLFNHFILPSSMLARLVNIYLFRCNSKILFVTSGFVGWLIGHILFMKWLGLVLVWIRQNHSIRSNKYIRSNKYLVLELRNSMARIFSILLFITCVYYLGRIPSPILTKKLKEASKTEERVESEEERDVEIETASEMKGTKQEQEGSTEEDPYPSPSLFSEERWDPDKIDETEEIRVNGKDKIKDKFHSHLTETGYNNINTSNSPIYDYEDSYLNNNNTGNTEIFKLQLLDKKNENKDLFWFQQPLVSLLFDYNRWNRPFRYIKNNRFEQAIRTEMSQYFFNTCKSDGKQRISFTYPPSLSTFWKMIKRRIPLLSLQKTLPNELDNQWISTNKEKSNNLNKEFLNRLEVLDKESFSLDILETRTRLCNDDTKKEYVPKMYDPLLNGPYRGTIKKKFSPSIINNTSLENLKERVRINRIHTIFLPNTDYQELEQKVDTVAKKPLSTEIDEFLTLINEFGNEPKSSLNLKDLSLFSDQEQGRVNSEKRTKFVKFVFNAIAPNGTTSEKKSIGIKEISKKIPRWSHKLITELEQQSGDYQEGVPLDHQIRSRKAKRVVIFTANNQNNDPDTKDTDTADQDQTKEVALIRYSQQPDFRRGIIKGSMRAQRRKTVIWKLFQANVHSPLFLDRITPPFLFSFDISGLIKPIFRNWSGKEGEFKILESREEQTKREEKKEKDKKGENKRKEKARIEIAEAWDTIPFAQIIRGYMLITQSILRKYIVLPSLIIAKNLGRMLVLQLPEWSEDLQEWNREMHIKCTYNGVQLSETEFPKNWLKDGIQIKILFPFCLKPWHISKLYSSRGELMKKKKQKDDFCFLTVWGMEAELPFGSPRKRPSFFEPIFKELEKKIGKFKKKYFITLKVFKGKIKLFRRISKETKKWLIKSSLFIKKMKKELSKVNPIVLFRLKEIDESNETKKEKDSLMSNQIINESFSQIESGNWPNSSLIESKMKDLTDRTSTIKNQIERITKEKKKVTPEIDISPNKTNNIKKFESPKKIFQILKRRNTRLIWKFHYFLKLFIQRLYIDLFLSIINIPRINTQLFLESTNKLIDKYISNNEINQEKINNQKKIHFISTIKKSLYNISKKNSHIFFDLSYLSQAYVFYKLSQPQVINLSKLRSVLQYNRTSFFLKTKIKDYFRTLGIFHSELKHKKLQSYRINQWKNWLRRHYQYDLSQIRWSRLMPQKWRNRVNQGCMAQNRNLNKWNSYEKDQLIHYKKENDSELYSLANQKDNFQKCYRYDLLAYKSINYEKKNDSFISRLPFQVNKNLEISSNSNTSKHNLFDMLGNLHINNYLRKGNILYIERNLDRKYFDWKIIHFSLRQKEDIEAWVKIDTNSNPNTKIGINNYQIIDKIDKKGFFYLTIHQNPENNQKNSKKAFFDWMGMNEKILNRPILNLEFWFFPEFVPLYNVYKIKPWIIPSKLLLLNLNTNENVSQNKNINKNQKQNFFLRSNKKIKNRIQEAKEPASQGEKERGSDIENKGNLGPVLSKHQNALKKDYAESDTKKGKKKKQYKSNTEAELDLFLKRYLLFQLRWNDALNQRMIENIKVYCLLLRLINPSKIAISSIQRREMSLDIMLIQKNLTLTELMKKGILIIEPIRLSVKNNGQFIMYQTIGISLVHKSKHQTNQRYPEQRYVDKKNFDEFILQPQTQRINTDKNHFDLLVPENILWSRRRRELRIRSLFNSLNWNGIDRNSVFCNENNVKNWSQFLDERKPLYKEKNELIKLKFFLWPNYRLEDLACMNRYWFDTNNGSRFSILRIHMYPQLKIN</sequence>
<comment type="function">
    <text evidence="1">Involved in protein precursor import into chloroplasts. May be part of an intermediate translocation complex acting as a protein-conducting channel at the inner envelope.</text>
</comment>
<comment type="subunit">
    <text evidence="1">Part of the Tic complex.</text>
</comment>
<comment type="subcellular location">
    <subcellularLocation>
        <location evidence="1">Plastid</location>
        <location evidence="1">Chloroplast inner membrane</location>
        <topology evidence="2">Multi-pass membrane protein</topology>
    </subcellularLocation>
</comment>
<comment type="miscellaneous">
    <text>There is a partial copy of the N-terminus (positions 1-349) of ycf1 in the inverted repeat (BAE46710).</text>
</comment>
<comment type="similarity">
    <text evidence="4">Belongs to the TIC214 family.</text>
</comment>
<comment type="sequence caution" evidence="4">
    <conflict type="erroneous initiation">
        <sequence resource="EMBL-CDS" id="BAE46710"/>
    </conflict>
</comment>
<geneLocation type="chloroplast"/>
<keyword id="KW-0150">Chloroplast</keyword>
<keyword id="KW-0472">Membrane</keyword>
<keyword id="KW-0934">Plastid</keyword>
<keyword id="KW-1001">Plastid inner membrane</keyword>
<keyword id="KW-0653">Protein transport</keyword>
<keyword id="KW-1185">Reference proteome</keyword>
<keyword id="KW-0812">Transmembrane</keyword>
<keyword id="KW-1133">Transmembrane helix</keyword>
<keyword id="KW-0813">Transport</keyword>